<proteinExistence type="evidence at transcript level"/>
<gene>
    <name type="primary">TBCE</name>
</gene>
<comment type="function">
    <text evidence="2">Tubulin-folding protein; involved in the second step of the tubulin folding pathway and in the regulation of tubulin heterodimer dissociation. Required for correct organization of microtubule cytoskeleton and mitotic splindle, and maintenance of the neuronal microtubule network.</text>
</comment>
<comment type="subunit">
    <text evidence="2 3">Supercomplex made of cofactors A to E. Cofactors A and D function by capturing and stabilizing tubulin in a quasi-native conformation. Cofactor E binds to the cofactor D-tubulin complex; interaction with cofactor C then causes the release of tubulin polypeptides that are committed to the native state. Cofactors B and E can form a heterodimer which binds to alpha-tubulin and enhances their ability to dissociate tubulin heterodimers (By similarity). Interacts with TBCD (By similarity).</text>
</comment>
<comment type="subcellular location">
    <subcellularLocation>
        <location evidence="1">Cytoplasm</location>
    </subcellularLocation>
    <subcellularLocation>
        <location evidence="1">Cytoplasm</location>
        <location evidence="1">Cytoskeleton</location>
    </subcellularLocation>
</comment>
<comment type="similarity">
    <text evidence="5">Belongs to the TBCE family.</text>
</comment>
<protein>
    <recommendedName>
        <fullName>Tubulin-specific chaperone E</fullName>
    </recommendedName>
    <alternativeName>
        <fullName>Tubulin-folding cofactor E</fullName>
    </alternativeName>
</protein>
<sequence length="527" mass="59231">MSDTLTADVIGQRVEVNGEHATVRFAGVVPPVAGPWLGVEWDNPERGKHDGSHEGTVYFQCRHPTGGSFIRPNKVNFGTDFLTAIKNRYVLEDGPEEDRKEQIVTIGNKPVETIGFDSIMKQQSQLSKLQEVSLRNCAVSCAGEKGGVAEGCPNIRKVDLSKNLLSSWDEVIHIADQLRHLEVLNVSENKLKFPSGSVLTGTLSALKVLVLNQTGITWAEVLRCAMGCPGLEELYLESNNIFISERPTDVLQTVKLLDLSSNQLIDENQLYLIAHLPRLEQLILSDIGISSLHFPDAGIGCKTSLFPSLKYLVVNDNQISQWSFFNELDKLPSLRALSCLRNPLTKEDKEAETARLLIIASIGQLKTLNKCEILPEERRRAELDYRKAFGNEWKQAGGHKDPDKNRLSEEFLTAHPRYQFLCLKYGAPEEWELKTQQPLMLKNQLLTLKIKYPHQLDQKVLEKQLPGSMTIQKVKGLLSRLLKVPVSDLLLSYESPQKPGVEIELENDLKSLQFYSVENGDCLLVRW</sequence>
<dbReference type="EMBL" id="CR858712">
    <property type="protein sequence ID" value="CAH90921.1"/>
    <property type="molecule type" value="mRNA"/>
</dbReference>
<dbReference type="RefSeq" id="NP_001125526.1">
    <property type="nucleotide sequence ID" value="NM_001132054.1"/>
</dbReference>
<dbReference type="SMR" id="Q5RBD9"/>
<dbReference type="FunCoup" id="Q5RBD9">
    <property type="interactions" value="2179"/>
</dbReference>
<dbReference type="STRING" id="9601.ENSPPYP00000000096"/>
<dbReference type="GeneID" id="100172438"/>
<dbReference type="KEGG" id="pon:100172438"/>
<dbReference type="CTD" id="6905"/>
<dbReference type="eggNOG" id="KOG3207">
    <property type="taxonomic scope" value="Eukaryota"/>
</dbReference>
<dbReference type="InParanoid" id="Q5RBD9"/>
<dbReference type="OrthoDB" id="5273213at2759"/>
<dbReference type="Proteomes" id="UP000001595">
    <property type="component" value="Unplaced"/>
</dbReference>
<dbReference type="GO" id="GO:0005737">
    <property type="term" value="C:cytoplasm"/>
    <property type="evidence" value="ECO:0007669"/>
    <property type="project" value="UniProtKB-SubCell"/>
</dbReference>
<dbReference type="GO" id="GO:0005856">
    <property type="term" value="C:cytoskeleton"/>
    <property type="evidence" value="ECO:0007669"/>
    <property type="project" value="UniProtKB-SubCell"/>
</dbReference>
<dbReference type="GO" id="GO:0000226">
    <property type="term" value="P:microtubule cytoskeleton organization"/>
    <property type="evidence" value="ECO:0000250"/>
    <property type="project" value="UniProtKB"/>
</dbReference>
<dbReference type="GO" id="GO:0007052">
    <property type="term" value="P:mitotic spindle organization"/>
    <property type="evidence" value="ECO:0000250"/>
    <property type="project" value="UniProtKB"/>
</dbReference>
<dbReference type="GO" id="GO:0007023">
    <property type="term" value="P:post-chaperonin tubulin folding pathway"/>
    <property type="evidence" value="ECO:0000250"/>
    <property type="project" value="UniProtKB"/>
</dbReference>
<dbReference type="CDD" id="cd17044">
    <property type="entry name" value="Ubl_TBCE"/>
    <property type="match status" value="1"/>
</dbReference>
<dbReference type="FunFam" id="2.30.30.190:FF:000008">
    <property type="entry name" value="Tubulin-specific chaperone E"/>
    <property type="match status" value="1"/>
</dbReference>
<dbReference type="FunFam" id="3.10.20.90:FF:000173">
    <property type="entry name" value="Tubulin-specific chaperone E"/>
    <property type="match status" value="1"/>
</dbReference>
<dbReference type="FunFam" id="3.80.10.10:FF:000268">
    <property type="entry name" value="Tubulin-specific chaperone E"/>
    <property type="match status" value="1"/>
</dbReference>
<dbReference type="FunFam" id="3.80.10.10:FF:000593">
    <property type="entry name" value="Tubulin-specific chaperone E"/>
    <property type="match status" value="1"/>
</dbReference>
<dbReference type="Gene3D" id="2.30.30.190">
    <property type="entry name" value="CAP Gly-rich-like domain"/>
    <property type="match status" value="1"/>
</dbReference>
<dbReference type="Gene3D" id="3.10.20.90">
    <property type="entry name" value="Phosphatidylinositol 3-kinase Catalytic Subunit, Chain A, domain 1"/>
    <property type="match status" value="1"/>
</dbReference>
<dbReference type="Gene3D" id="3.80.10.10">
    <property type="entry name" value="Ribonuclease Inhibitor"/>
    <property type="match status" value="2"/>
</dbReference>
<dbReference type="InterPro" id="IPR036859">
    <property type="entry name" value="CAP-Gly_dom_sf"/>
</dbReference>
<dbReference type="InterPro" id="IPR000938">
    <property type="entry name" value="CAP-Gly_domain"/>
</dbReference>
<dbReference type="InterPro" id="IPR032675">
    <property type="entry name" value="LRR_dom_sf"/>
</dbReference>
<dbReference type="InterPro" id="IPR000626">
    <property type="entry name" value="Ubiquitin-like_dom"/>
</dbReference>
<dbReference type="InterPro" id="IPR029071">
    <property type="entry name" value="Ubiquitin-like_domsf"/>
</dbReference>
<dbReference type="InterPro" id="IPR044079">
    <property type="entry name" value="Ubl_TBCE"/>
</dbReference>
<dbReference type="PANTHER" id="PTHR18849:SF0">
    <property type="entry name" value="CILIA- AND FLAGELLA-ASSOCIATED PROTEIN 410-RELATED"/>
    <property type="match status" value="1"/>
</dbReference>
<dbReference type="PANTHER" id="PTHR18849">
    <property type="entry name" value="LEUCINE RICH REPEAT PROTEIN"/>
    <property type="match status" value="1"/>
</dbReference>
<dbReference type="Pfam" id="PF01302">
    <property type="entry name" value="CAP_GLY"/>
    <property type="match status" value="1"/>
</dbReference>
<dbReference type="Pfam" id="PF14560">
    <property type="entry name" value="Ubiquitin_2"/>
    <property type="match status" value="1"/>
</dbReference>
<dbReference type="SMART" id="SM01052">
    <property type="entry name" value="CAP_GLY"/>
    <property type="match status" value="1"/>
</dbReference>
<dbReference type="SUPFAM" id="SSF74924">
    <property type="entry name" value="Cap-Gly domain"/>
    <property type="match status" value="1"/>
</dbReference>
<dbReference type="SUPFAM" id="SSF52058">
    <property type="entry name" value="L domain-like"/>
    <property type="match status" value="1"/>
</dbReference>
<dbReference type="SUPFAM" id="SSF54236">
    <property type="entry name" value="Ubiquitin-like"/>
    <property type="match status" value="1"/>
</dbReference>
<dbReference type="PROSITE" id="PS00845">
    <property type="entry name" value="CAP_GLY_1"/>
    <property type="match status" value="1"/>
</dbReference>
<dbReference type="PROSITE" id="PS50245">
    <property type="entry name" value="CAP_GLY_2"/>
    <property type="match status" value="1"/>
</dbReference>
<reference key="1">
    <citation type="submission" date="2004-11" db="EMBL/GenBank/DDBJ databases">
        <authorList>
            <consortium name="The German cDNA consortium"/>
        </authorList>
    </citation>
    <scope>NUCLEOTIDE SEQUENCE [LARGE SCALE MRNA]</scope>
    <source>
        <tissue>Kidney</tissue>
    </source>
</reference>
<evidence type="ECO:0000250" key="1"/>
<evidence type="ECO:0000250" key="2">
    <source>
        <dbReference type="UniProtKB" id="Q15813"/>
    </source>
</evidence>
<evidence type="ECO:0000250" key="3">
    <source>
        <dbReference type="UniProtKB" id="Q8CIV8"/>
    </source>
</evidence>
<evidence type="ECO:0000255" key="4">
    <source>
        <dbReference type="PROSITE-ProRule" id="PRU00045"/>
    </source>
</evidence>
<evidence type="ECO:0000305" key="5"/>
<organism>
    <name type="scientific">Pongo abelii</name>
    <name type="common">Sumatran orangutan</name>
    <name type="synonym">Pongo pygmaeus abelii</name>
    <dbReference type="NCBI Taxonomy" id="9601"/>
    <lineage>
        <taxon>Eukaryota</taxon>
        <taxon>Metazoa</taxon>
        <taxon>Chordata</taxon>
        <taxon>Craniata</taxon>
        <taxon>Vertebrata</taxon>
        <taxon>Euteleostomi</taxon>
        <taxon>Mammalia</taxon>
        <taxon>Eutheria</taxon>
        <taxon>Euarchontoglires</taxon>
        <taxon>Primates</taxon>
        <taxon>Haplorrhini</taxon>
        <taxon>Catarrhini</taxon>
        <taxon>Hominidae</taxon>
        <taxon>Pongo</taxon>
    </lineage>
</organism>
<feature type="initiator methionine" description="Removed" evidence="2">
    <location>
        <position position="1"/>
    </location>
</feature>
<feature type="chain" id="PRO_0000083540" description="Tubulin-specific chaperone E">
    <location>
        <begin position="2"/>
        <end position="527"/>
    </location>
</feature>
<feature type="domain" description="CAP-Gly" evidence="4">
    <location>
        <begin position="27"/>
        <end position="71"/>
    </location>
</feature>
<feature type="repeat" description="LRR 1">
    <location>
        <begin position="154"/>
        <end position="175"/>
    </location>
</feature>
<feature type="repeat" description="LRR 2">
    <location>
        <begin position="180"/>
        <end position="200"/>
    </location>
</feature>
<feature type="repeat" description="LRR 3">
    <location>
        <begin position="205"/>
        <end position="226"/>
    </location>
</feature>
<feature type="repeat" description="LRR 4">
    <location>
        <begin position="230"/>
        <end position="252"/>
    </location>
</feature>
<feature type="repeat" description="LRR 5">
    <location>
        <begin position="253"/>
        <end position="274"/>
    </location>
</feature>
<feature type="repeat" description="LRR 6">
    <location>
        <begin position="278"/>
        <end position="299"/>
    </location>
</feature>
<feature type="repeat" description="LRR 7">
    <location>
        <begin position="308"/>
        <end position="329"/>
    </location>
</feature>
<feature type="domain" description="LRRCT">
    <location>
        <begin position="342"/>
        <end position="384"/>
    </location>
</feature>
<feature type="modified residue" description="N-acetylserine" evidence="2">
    <location>
        <position position="2"/>
    </location>
</feature>
<feature type="modified residue" description="N6-acetyllysine" evidence="2">
    <location>
        <position position="463"/>
    </location>
</feature>
<feature type="modified residue" description="Phosphoserine" evidence="2">
    <location>
        <position position="495"/>
    </location>
</feature>
<name>TBCE_PONAB</name>
<accession>Q5RBD9</accession>
<keyword id="KW-0007">Acetylation</keyword>
<keyword id="KW-0143">Chaperone</keyword>
<keyword id="KW-0963">Cytoplasm</keyword>
<keyword id="KW-0206">Cytoskeleton</keyword>
<keyword id="KW-0433">Leucine-rich repeat</keyword>
<keyword id="KW-0597">Phosphoprotein</keyword>
<keyword id="KW-1185">Reference proteome</keyword>
<keyword id="KW-0677">Repeat</keyword>